<proteinExistence type="inferred from homology"/>
<feature type="chain" id="PRO_0000160425" description="ATP-dependent Clp protease ATP-binding subunit ClpX">
    <location>
        <begin position="1"/>
        <end position="420"/>
    </location>
</feature>
<feature type="domain" description="ClpX-type ZB" evidence="2">
    <location>
        <begin position="1"/>
        <end position="54"/>
    </location>
</feature>
<feature type="binding site" evidence="2">
    <location>
        <position position="13"/>
    </location>
    <ligand>
        <name>Zn(2+)</name>
        <dbReference type="ChEBI" id="CHEBI:29105"/>
    </ligand>
</feature>
<feature type="binding site" evidence="2">
    <location>
        <position position="16"/>
    </location>
    <ligand>
        <name>Zn(2+)</name>
        <dbReference type="ChEBI" id="CHEBI:29105"/>
    </ligand>
</feature>
<feature type="binding site" evidence="2">
    <location>
        <position position="35"/>
    </location>
    <ligand>
        <name>Zn(2+)</name>
        <dbReference type="ChEBI" id="CHEBI:29105"/>
    </ligand>
</feature>
<feature type="binding site" evidence="2">
    <location>
        <position position="38"/>
    </location>
    <ligand>
        <name>Zn(2+)</name>
        <dbReference type="ChEBI" id="CHEBI:29105"/>
    </ligand>
</feature>
<feature type="binding site" evidence="1">
    <location>
        <begin position="118"/>
        <end position="125"/>
    </location>
    <ligand>
        <name>ATP</name>
        <dbReference type="ChEBI" id="CHEBI:30616"/>
    </ligand>
</feature>
<protein>
    <recommendedName>
        <fullName evidence="1">ATP-dependent Clp protease ATP-binding subunit ClpX</fullName>
    </recommendedName>
</protein>
<reference key="1">
    <citation type="journal article" date="2003" name="Mol. Microbiol.">
        <title>Genome-based analysis of virulence genes in a non-biofilm-forming Staphylococcus epidermidis strain (ATCC 12228).</title>
        <authorList>
            <person name="Zhang Y.-Q."/>
            <person name="Ren S.-X."/>
            <person name="Li H.-L."/>
            <person name="Wang Y.-X."/>
            <person name="Fu G."/>
            <person name="Yang J."/>
            <person name="Qin Z.-Q."/>
            <person name="Miao Y.-G."/>
            <person name="Wang W.-Y."/>
            <person name="Chen R.-S."/>
            <person name="Shen Y."/>
            <person name="Chen Z."/>
            <person name="Yuan Z.-H."/>
            <person name="Zhao G.-P."/>
            <person name="Qu D."/>
            <person name="Danchin A."/>
            <person name="Wen Y.-M."/>
        </authorList>
    </citation>
    <scope>NUCLEOTIDE SEQUENCE [LARGE SCALE GENOMIC DNA]</scope>
    <source>
        <strain>ATCC 12228 / FDA PCI 1200</strain>
    </source>
</reference>
<gene>
    <name evidence="1" type="primary">clpX</name>
    <name type="ordered locus">SE_1349</name>
</gene>
<dbReference type="EMBL" id="AE015929">
    <property type="protein sequence ID" value="AAO04948.1"/>
    <property type="molecule type" value="Genomic_DNA"/>
</dbReference>
<dbReference type="RefSeq" id="NP_764904.1">
    <property type="nucleotide sequence ID" value="NC_004461.1"/>
</dbReference>
<dbReference type="RefSeq" id="WP_001830765.1">
    <property type="nucleotide sequence ID" value="NZ_WBME01000016.1"/>
</dbReference>
<dbReference type="SMR" id="Q8CNY5"/>
<dbReference type="GeneID" id="50018536"/>
<dbReference type="KEGG" id="sep:SE_1349"/>
<dbReference type="PATRIC" id="fig|176280.10.peg.1318"/>
<dbReference type="eggNOG" id="COG1219">
    <property type="taxonomic scope" value="Bacteria"/>
</dbReference>
<dbReference type="HOGENOM" id="CLU_014218_8_2_9"/>
<dbReference type="OrthoDB" id="9804062at2"/>
<dbReference type="Proteomes" id="UP000001411">
    <property type="component" value="Chromosome"/>
</dbReference>
<dbReference type="GO" id="GO:0009376">
    <property type="term" value="C:HslUV protease complex"/>
    <property type="evidence" value="ECO:0007669"/>
    <property type="project" value="TreeGrafter"/>
</dbReference>
<dbReference type="GO" id="GO:0005524">
    <property type="term" value="F:ATP binding"/>
    <property type="evidence" value="ECO:0007669"/>
    <property type="project" value="UniProtKB-UniRule"/>
</dbReference>
<dbReference type="GO" id="GO:0016887">
    <property type="term" value="F:ATP hydrolysis activity"/>
    <property type="evidence" value="ECO:0007669"/>
    <property type="project" value="InterPro"/>
</dbReference>
<dbReference type="GO" id="GO:0140662">
    <property type="term" value="F:ATP-dependent protein folding chaperone"/>
    <property type="evidence" value="ECO:0007669"/>
    <property type="project" value="InterPro"/>
</dbReference>
<dbReference type="GO" id="GO:0046983">
    <property type="term" value="F:protein dimerization activity"/>
    <property type="evidence" value="ECO:0007669"/>
    <property type="project" value="InterPro"/>
</dbReference>
<dbReference type="GO" id="GO:0051082">
    <property type="term" value="F:unfolded protein binding"/>
    <property type="evidence" value="ECO:0007669"/>
    <property type="project" value="UniProtKB-UniRule"/>
</dbReference>
<dbReference type="GO" id="GO:0008270">
    <property type="term" value="F:zinc ion binding"/>
    <property type="evidence" value="ECO:0007669"/>
    <property type="project" value="InterPro"/>
</dbReference>
<dbReference type="GO" id="GO:0051301">
    <property type="term" value="P:cell division"/>
    <property type="evidence" value="ECO:0007669"/>
    <property type="project" value="TreeGrafter"/>
</dbReference>
<dbReference type="GO" id="GO:0051603">
    <property type="term" value="P:proteolysis involved in protein catabolic process"/>
    <property type="evidence" value="ECO:0007669"/>
    <property type="project" value="TreeGrafter"/>
</dbReference>
<dbReference type="CDD" id="cd19497">
    <property type="entry name" value="RecA-like_ClpX"/>
    <property type="match status" value="1"/>
</dbReference>
<dbReference type="FunFam" id="1.10.8.60:FF:000002">
    <property type="entry name" value="ATP-dependent Clp protease ATP-binding subunit ClpX"/>
    <property type="match status" value="1"/>
</dbReference>
<dbReference type="FunFam" id="3.40.50.300:FF:000005">
    <property type="entry name" value="ATP-dependent Clp protease ATP-binding subunit ClpX"/>
    <property type="match status" value="1"/>
</dbReference>
<dbReference type="Gene3D" id="1.10.8.60">
    <property type="match status" value="1"/>
</dbReference>
<dbReference type="Gene3D" id="6.20.220.10">
    <property type="entry name" value="ClpX chaperone, C4-type zinc finger domain"/>
    <property type="match status" value="1"/>
</dbReference>
<dbReference type="Gene3D" id="3.40.50.300">
    <property type="entry name" value="P-loop containing nucleotide triphosphate hydrolases"/>
    <property type="match status" value="1"/>
</dbReference>
<dbReference type="HAMAP" id="MF_00175">
    <property type="entry name" value="ClpX"/>
    <property type="match status" value="1"/>
</dbReference>
<dbReference type="InterPro" id="IPR003593">
    <property type="entry name" value="AAA+_ATPase"/>
</dbReference>
<dbReference type="InterPro" id="IPR050052">
    <property type="entry name" value="ATP-dep_Clp_protease_ClpX"/>
</dbReference>
<dbReference type="InterPro" id="IPR003959">
    <property type="entry name" value="ATPase_AAA_core"/>
</dbReference>
<dbReference type="InterPro" id="IPR019489">
    <property type="entry name" value="Clp_ATPase_C"/>
</dbReference>
<dbReference type="InterPro" id="IPR004487">
    <property type="entry name" value="Clp_protease_ATP-bd_su_ClpX"/>
</dbReference>
<dbReference type="InterPro" id="IPR046425">
    <property type="entry name" value="ClpX_bact"/>
</dbReference>
<dbReference type="InterPro" id="IPR027417">
    <property type="entry name" value="P-loop_NTPase"/>
</dbReference>
<dbReference type="InterPro" id="IPR010603">
    <property type="entry name" value="Znf_CppX_C4"/>
</dbReference>
<dbReference type="InterPro" id="IPR038366">
    <property type="entry name" value="Znf_CppX_C4_sf"/>
</dbReference>
<dbReference type="NCBIfam" id="TIGR00382">
    <property type="entry name" value="clpX"/>
    <property type="match status" value="1"/>
</dbReference>
<dbReference type="NCBIfam" id="NF003745">
    <property type="entry name" value="PRK05342.1"/>
    <property type="match status" value="1"/>
</dbReference>
<dbReference type="PANTHER" id="PTHR48102:SF7">
    <property type="entry name" value="ATP-DEPENDENT CLP PROTEASE ATP-BINDING SUBUNIT CLPX-LIKE, MITOCHONDRIAL"/>
    <property type="match status" value="1"/>
</dbReference>
<dbReference type="PANTHER" id="PTHR48102">
    <property type="entry name" value="ATP-DEPENDENT CLP PROTEASE ATP-BINDING SUBUNIT CLPX-LIKE, MITOCHONDRIAL-RELATED"/>
    <property type="match status" value="1"/>
</dbReference>
<dbReference type="Pfam" id="PF07724">
    <property type="entry name" value="AAA_2"/>
    <property type="match status" value="1"/>
</dbReference>
<dbReference type="Pfam" id="PF10431">
    <property type="entry name" value="ClpB_D2-small"/>
    <property type="match status" value="1"/>
</dbReference>
<dbReference type="Pfam" id="PF06689">
    <property type="entry name" value="zf-C4_ClpX"/>
    <property type="match status" value="1"/>
</dbReference>
<dbReference type="SMART" id="SM00382">
    <property type="entry name" value="AAA"/>
    <property type="match status" value="1"/>
</dbReference>
<dbReference type="SMART" id="SM01086">
    <property type="entry name" value="ClpB_D2-small"/>
    <property type="match status" value="1"/>
</dbReference>
<dbReference type="SMART" id="SM00994">
    <property type="entry name" value="zf-C4_ClpX"/>
    <property type="match status" value="1"/>
</dbReference>
<dbReference type="SUPFAM" id="SSF57716">
    <property type="entry name" value="Glucocorticoid receptor-like (DNA-binding domain)"/>
    <property type="match status" value="1"/>
</dbReference>
<dbReference type="SUPFAM" id="SSF52540">
    <property type="entry name" value="P-loop containing nucleoside triphosphate hydrolases"/>
    <property type="match status" value="1"/>
</dbReference>
<dbReference type="PROSITE" id="PS51902">
    <property type="entry name" value="CLPX_ZB"/>
    <property type="match status" value="1"/>
</dbReference>
<comment type="function">
    <text evidence="1">ATP-dependent specificity component of the Clp protease. It directs the protease to specific substrates. Can perform chaperone functions in the absence of ClpP.</text>
</comment>
<comment type="subunit">
    <text evidence="1">Component of the ClpX-ClpP complex. Forms a hexameric ring that, in the presence of ATP, binds to fourteen ClpP subunits assembled into a disk-like structure with a central cavity, resembling the structure of eukaryotic proteasomes.</text>
</comment>
<comment type="similarity">
    <text evidence="1">Belongs to the ClpX chaperone family.</text>
</comment>
<sequence length="420" mass="46395">MFKFNEDEENLKCSFCGKDQDQVKKLVAGSGVYICNECIELCSEIVEEELAQNTSEGFTELPTPKEIMDHLNEYVIGQEKAKKSLAVAVYNHYKRIQQLGPNEDDVELQKSNIALIGPTGSGKTLLAQTLAKTLNVPFAIADATSLTEAGYVGDDVENILLRLIQAADFDIDKAEKGIIYVDEIDKIARKSENTSITRDVSGEGVQQALLKILEGTTASVPPQGGRKHPNQELIQIDTTNILFILGGAFDGIDEVIKRRLGEKVIGFASNEADKYDEEALLEQIRPEDLQSYGLIPEFIGRVPIVANLETLDVAALKNILTQPKNALVKQYTKMLELDNVELEFSEEALSAISEKAIERKTGARGLRSIIEEALIDIMYDVPSSENVSKVVITEQTINEEIEPELYDDEGNLINKNKTSA</sequence>
<name>CLPX_STAES</name>
<keyword id="KW-0067">ATP-binding</keyword>
<keyword id="KW-0143">Chaperone</keyword>
<keyword id="KW-0479">Metal-binding</keyword>
<keyword id="KW-0547">Nucleotide-binding</keyword>
<keyword id="KW-0862">Zinc</keyword>
<evidence type="ECO:0000255" key="1">
    <source>
        <dbReference type="HAMAP-Rule" id="MF_00175"/>
    </source>
</evidence>
<evidence type="ECO:0000255" key="2">
    <source>
        <dbReference type="PROSITE-ProRule" id="PRU01250"/>
    </source>
</evidence>
<organism>
    <name type="scientific">Staphylococcus epidermidis (strain ATCC 12228 / FDA PCI 1200)</name>
    <dbReference type="NCBI Taxonomy" id="176280"/>
    <lineage>
        <taxon>Bacteria</taxon>
        <taxon>Bacillati</taxon>
        <taxon>Bacillota</taxon>
        <taxon>Bacilli</taxon>
        <taxon>Bacillales</taxon>
        <taxon>Staphylococcaceae</taxon>
        <taxon>Staphylococcus</taxon>
    </lineage>
</organism>
<accession>Q8CNY5</accession>